<name>PMA1_DICDI</name>
<keyword id="KW-0067">ATP-binding</keyword>
<keyword id="KW-1003">Cell membrane</keyword>
<keyword id="KW-0375">Hydrogen ion transport</keyword>
<keyword id="KW-0406">Ion transport</keyword>
<keyword id="KW-0460">Magnesium</keyword>
<keyword id="KW-0472">Membrane</keyword>
<keyword id="KW-0479">Metal-binding</keyword>
<keyword id="KW-0547">Nucleotide-binding</keyword>
<keyword id="KW-0597">Phosphoprotein</keyword>
<keyword id="KW-1185">Reference proteome</keyword>
<keyword id="KW-1278">Translocase</keyword>
<keyword id="KW-0812">Transmembrane</keyword>
<keyword id="KW-1133">Transmembrane helix</keyword>
<keyword id="KW-0813">Transport</keyword>
<sequence length="1058" mass="117268">MDNNQIPKNSPESSAINSAESSPKSNVSSDVLHENHHKEQQQLQQQLQQEQQQQQLPTTPQSEPTQRVNNNEEGIEMDRIAENSNINVPSDVGESSLKTISGYPSSKNTEAGSSSSGKKEEDYNYRSTWVPKLHQELFENPEVLESRRTKQRASNYRKTLEREKEGIKPLDNILEELKANANGLTKAEAQKRLEEVGPNAIPDVKRYPILEFLYFMWNPLSWTMEVAAIVSIALLDWVDFILICALLLLNATIGFIEENTAGNAVEALKNSLVSQIRCMRDGEWVMLPSPDLVPGDVVMLKIGAIIPADCRVIEAEQVKIDQSSLTGESLPVTKKIGDEVYSGSAMKQGEAKCVVTATGVNTFFGRAANLVQETEGHGHLQVILRNIGLFCISFIAIWVLVELLVDFLGYDGYCHGVGGGRCLPLNNALVLLVGGIPIAMPTVLSVTMAIGATQLSKKKAIVSRLASIEELAAMDILCSDKTGTLTLNILTVDEPLPVGDTPKEDIVFHAFLACSEGEDQDAIDKAISNYCRDTYPNVDYSGNEIVKHYPFNPEDKKAMGLVNANGKQFKTAKGAPQIILREADNYKQVGEAVEKEIENLADRGYRALGVSVSYDAPDFKVWHFEGLIPLFDPPRHDTEDTIKRALEMGVSVKMITGDQLAIAKETARRLGMGGNLFTIPYLENNDLGISEGEVIEMADGFAEMWPEHKYKVVDQLQKRKHVVGMTGDGVNDAPALKKAQIGIAVAGATDAARSVSDIVLTSSGLSVIIDAIISSRKIFQRMRNYVIYSVAATVRICTTFGILTVAWNFKFPTIATVIIAILNDGTMLTISKDRVRARNEPDQWNLFEVFTMALCYGFYLVGSTIVFFAIIHDGTWFHDAINLRILTDNELRGLIYLQVSISGLATIFVSRSQGFSYFERPGNLVIFAFVMSQIVATFIGVYGFRGYPHDSFSDNPDYPVHGTNFQGCGWGWAVCAWIWCFLWYIPMDFIKLGVTYILRGKIEPINKDALRKIYGWFGKEIPKEATQVSHKVAEQQAKRDALHAQETHHKSVVTDNKV</sequence>
<proteinExistence type="evidence at protein level"/>
<feature type="chain" id="PRO_0000046295" description="Probable plasma membrane ATPase">
    <location>
        <begin position="1"/>
        <end position="1058"/>
    </location>
</feature>
<feature type="topological domain" description="Cytoplasmic" evidence="2">
    <location>
        <begin position="1"/>
        <end position="212"/>
    </location>
</feature>
<feature type="transmembrane region" description="Helical" evidence="2">
    <location>
        <begin position="213"/>
        <end position="232"/>
    </location>
</feature>
<feature type="topological domain" description="Extracellular" evidence="2">
    <location>
        <begin position="233"/>
        <end position="237"/>
    </location>
</feature>
<feature type="transmembrane region" description="Helical" evidence="2">
    <location>
        <begin position="238"/>
        <end position="258"/>
    </location>
</feature>
<feature type="topological domain" description="Cytoplasmic" evidence="2">
    <location>
        <begin position="259"/>
        <end position="387"/>
    </location>
</feature>
<feature type="transmembrane region" description="Helical" evidence="2">
    <location>
        <begin position="388"/>
        <end position="407"/>
    </location>
</feature>
<feature type="topological domain" description="Extracellular" evidence="2">
    <location>
        <begin position="408"/>
        <end position="425"/>
    </location>
</feature>
<feature type="transmembrane region" description="Helical" evidence="2">
    <location>
        <begin position="426"/>
        <end position="447"/>
    </location>
</feature>
<feature type="topological domain" description="Cytoplasmic" evidence="2">
    <location>
        <begin position="448"/>
        <end position="783"/>
    </location>
</feature>
<feature type="transmembrane region" description="Helical" evidence="2">
    <location>
        <begin position="784"/>
        <end position="805"/>
    </location>
</feature>
<feature type="topological domain" description="Extracellular" evidence="2">
    <location>
        <begin position="806"/>
        <end position="810"/>
    </location>
</feature>
<feature type="transmembrane region" description="Helical" evidence="2">
    <location>
        <begin position="811"/>
        <end position="833"/>
    </location>
</feature>
<feature type="topological domain" description="Cytoplasmic" evidence="2">
    <location>
        <begin position="834"/>
        <end position="849"/>
    </location>
</feature>
<feature type="transmembrane region" description="Helical" evidence="2">
    <location>
        <begin position="850"/>
        <end position="870"/>
    </location>
</feature>
<feature type="topological domain" description="Extracellular" evidence="2">
    <location>
        <begin position="871"/>
        <end position="889"/>
    </location>
</feature>
<feature type="transmembrane region" description="Helical" evidence="2">
    <location>
        <begin position="890"/>
        <end position="910"/>
    </location>
</feature>
<feature type="topological domain" description="Cytoplasmic" evidence="2">
    <location>
        <begin position="911"/>
        <end position="922"/>
    </location>
</feature>
<feature type="transmembrane region" description="Helical" evidence="2">
    <location>
        <begin position="923"/>
        <end position="943"/>
    </location>
</feature>
<feature type="topological domain" description="Extracellular" evidence="2">
    <location>
        <begin position="944"/>
        <end position="967"/>
    </location>
</feature>
<feature type="transmembrane region" description="Helical" evidence="2">
    <location>
        <begin position="968"/>
        <end position="988"/>
    </location>
</feature>
<feature type="topological domain" description="Cytoplasmic" evidence="2">
    <location>
        <begin position="989"/>
        <end position="1058"/>
    </location>
</feature>
<feature type="region of interest" description="Disordered" evidence="3">
    <location>
        <begin position="1"/>
        <end position="123"/>
    </location>
</feature>
<feature type="compositionally biased region" description="Polar residues" evidence="3">
    <location>
        <begin position="1"/>
        <end position="29"/>
    </location>
</feature>
<feature type="compositionally biased region" description="Basic and acidic residues" evidence="3">
    <location>
        <begin position="31"/>
        <end position="40"/>
    </location>
</feature>
<feature type="compositionally biased region" description="Low complexity" evidence="3">
    <location>
        <begin position="41"/>
        <end position="66"/>
    </location>
</feature>
<feature type="compositionally biased region" description="Polar residues" evidence="3">
    <location>
        <begin position="96"/>
        <end position="111"/>
    </location>
</feature>
<feature type="active site" description="4-aspartylphosphate intermediate" evidence="1">
    <location>
        <position position="480"/>
    </location>
</feature>
<feature type="binding site" evidence="1">
    <location>
        <position position="728"/>
    </location>
    <ligand>
        <name>Mg(2+)</name>
        <dbReference type="ChEBI" id="CHEBI:18420"/>
    </ligand>
</feature>
<feature type="binding site" evidence="1">
    <location>
        <position position="732"/>
    </location>
    <ligand>
        <name>Mg(2+)</name>
        <dbReference type="ChEBI" id="CHEBI:18420"/>
    </ligand>
</feature>
<organism>
    <name type="scientific">Dictyostelium discoideum</name>
    <name type="common">Social amoeba</name>
    <dbReference type="NCBI Taxonomy" id="44689"/>
    <lineage>
        <taxon>Eukaryota</taxon>
        <taxon>Amoebozoa</taxon>
        <taxon>Evosea</taxon>
        <taxon>Eumycetozoa</taxon>
        <taxon>Dictyostelia</taxon>
        <taxon>Dictyosteliales</taxon>
        <taxon>Dictyosteliaceae</taxon>
        <taxon>Dictyostelium</taxon>
    </lineage>
</organism>
<comment type="function">
    <text evidence="4 5">P-type plasma membrane H+-ATPase (proton pump) (PubMed:9421912). The proton gradient it generates drives the active transport of nutrients by H(+) symport (PubMed:9421912). The resulting external acidification and/or internal alkinization may mediate growth responses (PubMed:9421912).</text>
</comment>
<comment type="catalytic activity">
    <reaction evidence="4">
        <text>ATP + H2O + H(+)(in) = ADP + phosphate + 2 H(+)(out)</text>
        <dbReference type="Rhea" id="RHEA:20852"/>
        <dbReference type="ChEBI" id="CHEBI:15377"/>
        <dbReference type="ChEBI" id="CHEBI:15378"/>
        <dbReference type="ChEBI" id="CHEBI:30616"/>
        <dbReference type="ChEBI" id="CHEBI:43474"/>
        <dbReference type="ChEBI" id="CHEBI:456216"/>
        <dbReference type="EC" id="7.1.2.1"/>
    </reaction>
    <physiologicalReaction direction="left-to-right" evidence="4">
        <dbReference type="Rhea" id="RHEA:20853"/>
    </physiologicalReaction>
</comment>
<comment type="activity regulation">
    <text evidence="4">Acid pH levels increase its ATPase activity.</text>
</comment>
<comment type="subcellular location">
    <subcellularLocation>
        <location>Cell membrane</location>
        <topology evidence="4">Multi-pass membrane protein</topology>
    </subcellularLocation>
</comment>
<comment type="similarity">
    <text evidence="6">Belongs to the cation transport ATPase (P-type) (TC 3.A.3) family. Type IIIA subfamily.</text>
</comment>
<comment type="sequence caution" evidence="6">
    <conflict type="frameshift">
        <sequence resource="EMBL-CDS" id="CAA66931"/>
    </conflict>
</comment>
<evidence type="ECO:0000250" key="1"/>
<evidence type="ECO:0000255" key="2"/>
<evidence type="ECO:0000256" key="3">
    <source>
        <dbReference type="SAM" id="MobiDB-lite"/>
    </source>
</evidence>
<evidence type="ECO:0000269" key="4">
    <source>
    </source>
</evidence>
<evidence type="ECO:0000303" key="5">
    <source>
    </source>
</evidence>
<evidence type="ECO:0000305" key="6"/>
<gene>
    <name type="primary">patB</name>
    <name type="ORF">DDB_G0282817</name>
</gene>
<protein>
    <recommendedName>
        <fullName>Probable plasma membrane ATPase</fullName>
        <shortName evidence="5">PAT2</shortName>
        <ecNumber evidence="4">7.1.2.1</ecNumber>
    </recommendedName>
    <alternativeName>
        <fullName evidence="5">P-type H(+)-ATPase</fullName>
    </alternativeName>
    <alternativeName>
        <fullName>Proton pump</fullName>
    </alternativeName>
</protein>
<accession>P54679</accession>
<accession>Q54RX4</accession>
<reference key="1">
    <citation type="journal article" date="1997" name="Microbiology">
        <title>The patB gene of Dictyostelium discoideum encodes a P-type H(+)-ATPase isoform essential for growth and development under acidic conditions.</title>
        <authorList>
            <person name="Coukell M.B."/>
            <person name="Moniakis J."/>
            <person name="Cameron A.M."/>
        </authorList>
    </citation>
    <scope>NUCLEOTIDE SEQUENCE [MRNA]</scope>
    <scope>FUNCTION</scope>
    <scope>CATALYTIC ACTIVITY</scope>
    <scope>ACTIVITY REGULATION</scope>
    <scope>SUBCELLULAR LOCATION</scope>
    <source>
        <strain>AX3</strain>
    </source>
</reference>
<reference key="2">
    <citation type="journal article" date="2005" name="Nature">
        <title>The genome of the social amoeba Dictyostelium discoideum.</title>
        <authorList>
            <person name="Eichinger L."/>
            <person name="Pachebat J.A."/>
            <person name="Gloeckner G."/>
            <person name="Rajandream M.A."/>
            <person name="Sucgang R."/>
            <person name="Berriman M."/>
            <person name="Song J."/>
            <person name="Olsen R."/>
            <person name="Szafranski K."/>
            <person name="Xu Q."/>
            <person name="Tunggal B."/>
            <person name="Kummerfeld S."/>
            <person name="Madera M."/>
            <person name="Konfortov B.A."/>
            <person name="Rivero F."/>
            <person name="Bankier A.T."/>
            <person name="Lehmann R."/>
            <person name="Hamlin N."/>
            <person name="Davies R."/>
            <person name="Gaudet P."/>
            <person name="Fey P."/>
            <person name="Pilcher K."/>
            <person name="Chen G."/>
            <person name="Saunders D."/>
            <person name="Sodergren E.J."/>
            <person name="Davis P."/>
            <person name="Kerhornou A."/>
            <person name="Nie X."/>
            <person name="Hall N."/>
            <person name="Anjard C."/>
            <person name="Hemphill L."/>
            <person name="Bason N."/>
            <person name="Farbrother P."/>
            <person name="Desany B."/>
            <person name="Just E."/>
            <person name="Morio T."/>
            <person name="Rost R."/>
            <person name="Churcher C.M."/>
            <person name="Cooper J."/>
            <person name="Haydock S."/>
            <person name="van Driessche N."/>
            <person name="Cronin A."/>
            <person name="Goodhead I."/>
            <person name="Muzny D.M."/>
            <person name="Mourier T."/>
            <person name="Pain A."/>
            <person name="Lu M."/>
            <person name="Harper D."/>
            <person name="Lindsay R."/>
            <person name="Hauser H."/>
            <person name="James K.D."/>
            <person name="Quiles M."/>
            <person name="Madan Babu M."/>
            <person name="Saito T."/>
            <person name="Buchrieser C."/>
            <person name="Wardroper A."/>
            <person name="Felder M."/>
            <person name="Thangavelu M."/>
            <person name="Johnson D."/>
            <person name="Knights A."/>
            <person name="Loulseged H."/>
            <person name="Mungall K.L."/>
            <person name="Oliver K."/>
            <person name="Price C."/>
            <person name="Quail M.A."/>
            <person name="Urushihara H."/>
            <person name="Hernandez J."/>
            <person name="Rabbinowitsch E."/>
            <person name="Steffen D."/>
            <person name="Sanders M."/>
            <person name="Ma J."/>
            <person name="Kohara Y."/>
            <person name="Sharp S."/>
            <person name="Simmonds M.N."/>
            <person name="Spiegler S."/>
            <person name="Tivey A."/>
            <person name="Sugano S."/>
            <person name="White B."/>
            <person name="Walker D."/>
            <person name="Woodward J.R."/>
            <person name="Winckler T."/>
            <person name="Tanaka Y."/>
            <person name="Shaulsky G."/>
            <person name="Schleicher M."/>
            <person name="Weinstock G.M."/>
            <person name="Rosenthal A."/>
            <person name="Cox E.C."/>
            <person name="Chisholm R.L."/>
            <person name="Gibbs R.A."/>
            <person name="Loomis W.F."/>
            <person name="Platzer M."/>
            <person name="Kay R.R."/>
            <person name="Williams J.G."/>
            <person name="Dear P.H."/>
            <person name="Noegel A.A."/>
            <person name="Barrell B.G."/>
            <person name="Kuspa A."/>
        </authorList>
    </citation>
    <scope>NUCLEOTIDE SEQUENCE [LARGE SCALE GENOMIC DNA]</scope>
    <source>
        <strain>AX4</strain>
    </source>
</reference>
<dbReference type="EC" id="7.1.2.1" evidence="4"/>
<dbReference type="EMBL" id="X98286">
    <property type="protein sequence ID" value="CAA66931.1"/>
    <property type="status" value="ALT_FRAME"/>
    <property type="molecule type" value="mRNA"/>
</dbReference>
<dbReference type="EMBL" id="AAFI02000047">
    <property type="protein sequence ID" value="EAL65988.1"/>
    <property type="molecule type" value="Genomic_DNA"/>
</dbReference>
<dbReference type="PIR" id="T30580">
    <property type="entry name" value="T30580"/>
</dbReference>
<dbReference type="RefSeq" id="XP_639363.1">
    <property type="nucleotide sequence ID" value="XM_634271.1"/>
</dbReference>
<dbReference type="SMR" id="P54679"/>
<dbReference type="FunCoup" id="P54679">
    <property type="interactions" value="2"/>
</dbReference>
<dbReference type="STRING" id="44689.P54679"/>
<dbReference type="PaxDb" id="44689-DDB0214946"/>
<dbReference type="EnsemblProtists" id="EAL65988">
    <property type="protein sequence ID" value="EAL65988"/>
    <property type="gene ID" value="DDB_G0282817"/>
</dbReference>
<dbReference type="GeneID" id="8623803"/>
<dbReference type="KEGG" id="ddi:DDB_G0282817"/>
<dbReference type="dictyBase" id="DDB_G0282817">
    <property type="gene designation" value="patB"/>
</dbReference>
<dbReference type="VEuPathDB" id="AmoebaDB:DDB_G0282817"/>
<dbReference type="eggNOG" id="KOG0205">
    <property type="taxonomic scope" value="Eukaryota"/>
</dbReference>
<dbReference type="HOGENOM" id="CLU_002360_6_4_1"/>
<dbReference type="InParanoid" id="P54679"/>
<dbReference type="OMA" id="FAYQFDF"/>
<dbReference type="PhylomeDB" id="P54679"/>
<dbReference type="PRO" id="PR:P54679"/>
<dbReference type="Proteomes" id="UP000002195">
    <property type="component" value="Chromosome 3"/>
</dbReference>
<dbReference type="GO" id="GO:0140220">
    <property type="term" value="C:pathogen-containing vacuole"/>
    <property type="evidence" value="ECO:0007005"/>
    <property type="project" value="dictyBase"/>
</dbReference>
<dbReference type="GO" id="GO:0005886">
    <property type="term" value="C:plasma membrane"/>
    <property type="evidence" value="ECO:0000314"/>
    <property type="project" value="dictyBase"/>
</dbReference>
<dbReference type="GO" id="GO:0005524">
    <property type="term" value="F:ATP binding"/>
    <property type="evidence" value="ECO:0000305"/>
    <property type="project" value="dictyBase"/>
</dbReference>
<dbReference type="GO" id="GO:0016887">
    <property type="term" value="F:ATP hydrolysis activity"/>
    <property type="evidence" value="ECO:0007669"/>
    <property type="project" value="InterPro"/>
</dbReference>
<dbReference type="GO" id="GO:0046872">
    <property type="term" value="F:metal ion binding"/>
    <property type="evidence" value="ECO:0007669"/>
    <property type="project" value="UniProtKB-KW"/>
</dbReference>
<dbReference type="GO" id="GO:0008553">
    <property type="term" value="F:P-type proton-exporting transporter activity"/>
    <property type="evidence" value="ECO:0000314"/>
    <property type="project" value="dictyBase"/>
</dbReference>
<dbReference type="GO" id="GO:0120029">
    <property type="term" value="P:proton export across plasma membrane"/>
    <property type="evidence" value="ECO:0007669"/>
    <property type="project" value="InterPro"/>
</dbReference>
<dbReference type="GO" id="GO:1902600">
    <property type="term" value="P:proton transmembrane transport"/>
    <property type="evidence" value="ECO:0000318"/>
    <property type="project" value="GO_Central"/>
</dbReference>
<dbReference type="GO" id="GO:0051453">
    <property type="term" value="P:regulation of intracellular pH"/>
    <property type="evidence" value="ECO:0000318"/>
    <property type="project" value="GO_Central"/>
</dbReference>
<dbReference type="CDD" id="cd02076">
    <property type="entry name" value="P-type_ATPase_H"/>
    <property type="match status" value="1"/>
</dbReference>
<dbReference type="FunFam" id="2.70.150.10:FF:000042">
    <property type="entry name" value="Plasma membrane ATPase"/>
    <property type="match status" value="1"/>
</dbReference>
<dbReference type="FunFam" id="3.40.1110.10:FF:000005">
    <property type="entry name" value="Plasma membrane ATPase"/>
    <property type="match status" value="1"/>
</dbReference>
<dbReference type="FunFam" id="3.40.50.1000:FF:000211">
    <property type="entry name" value="Plasma membrane ATPase"/>
    <property type="match status" value="1"/>
</dbReference>
<dbReference type="Gene3D" id="3.40.1110.10">
    <property type="entry name" value="Calcium-transporting ATPase, cytoplasmic domain N"/>
    <property type="match status" value="1"/>
</dbReference>
<dbReference type="Gene3D" id="2.70.150.10">
    <property type="entry name" value="Calcium-transporting ATPase, cytoplasmic transduction domain A"/>
    <property type="match status" value="1"/>
</dbReference>
<dbReference type="Gene3D" id="1.20.1110.10">
    <property type="entry name" value="Calcium-transporting ATPase, transmembrane domain"/>
    <property type="match status" value="1"/>
</dbReference>
<dbReference type="Gene3D" id="3.40.50.1000">
    <property type="entry name" value="HAD superfamily/HAD-like"/>
    <property type="match status" value="1"/>
</dbReference>
<dbReference type="InterPro" id="IPR004014">
    <property type="entry name" value="ATPase_P-typ_cation-transptr_N"/>
</dbReference>
<dbReference type="InterPro" id="IPR023299">
    <property type="entry name" value="ATPase_P-typ_cyto_dom_N"/>
</dbReference>
<dbReference type="InterPro" id="IPR018303">
    <property type="entry name" value="ATPase_P-typ_P_site"/>
</dbReference>
<dbReference type="InterPro" id="IPR023298">
    <property type="entry name" value="ATPase_P-typ_TM_dom_sf"/>
</dbReference>
<dbReference type="InterPro" id="IPR008250">
    <property type="entry name" value="ATPase_P-typ_transduc_dom_A_sf"/>
</dbReference>
<dbReference type="InterPro" id="IPR036412">
    <property type="entry name" value="HAD-like_sf"/>
</dbReference>
<dbReference type="InterPro" id="IPR023214">
    <property type="entry name" value="HAD_sf"/>
</dbReference>
<dbReference type="InterPro" id="IPR006534">
    <property type="entry name" value="P-type_ATPase_IIIA"/>
</dbReference>
<dbReference type="InterPro" id="IPR001757">
    <property type="entry name" value="P_typ_ATPase"/>
</dbReference>
<dbReference type="InterPro" id="IPR044492">
    <property type="entry name" value="P_typ_ATPase_HD_dom"/>
</dbReference>
<dbReference type="NCBIfam" id="TIGR01647">
    <property type="entry name" value="ATPase-IIIA_H"/>
    <property type="match status" value="1"/>
</dbReference>
<dbReference type="NCBIfam" id="TIGR01494">
    <property type="entry name" value="ATPase_P-type"/>
    <property type="match status" value="2"/>
</dbReference>
<dbReference type="PANTHER" id="PTHR42861">
    <property type="entry name" value="CALCIUM-TRANSPORTING ATPASE"/>
    <property type="match status" value="1"/>
</dbReference>
<dbReference type="Pfam" id="PF00690">
    <property type="entry name" value="Cation_ATPase_N"/>
    <property type="match status" value="1"/>
</dbReference>
<dbReference type="Pfam" id="PF00122">
    <property type="entry name" value="E1-E2_ATPase"/>
    <property type="match status" value="1"/>
</dbReference>
<dbReference type="Pfam" id="PF00702">
    <property type="entry name" value="Hydrolase"/>
    <property type="match status" value="1"/>
</dbReference>
<dbReference type="PRINTS" id="PR00119">
    <property type="entry name" value="CATATPASE"/>
</dbReference>
<dbReference type="PRINTS" id="PR00120">
    <property type="entry name" value="HATPASE"/>
</dbReference>
<dbReference type="SFLD" id="SFLDS00003">
    <property type="entry name" value="Haloacid_Dehalogenase"/>
    <property type="match status" value="1"/>
</dbReference>
<dbReference type="SFLD" id="SFLDF00027">
    <property type="entry name" value="p-type_atpase"/>
    <property type="match status" value="1"/>
</dbReference>
<dbReference type="SMART" id="SM00831">
    <property type="entry name" value="Cation_ATPase_N"/>
    <property type="match status" value="1"/>
</dbReference>
<dbReference type="SUPFAM" id="SSF81653">
    <property type="entry name" value="Calcium ATPase, transduction domain A"/>
    <property type="match status" value="1"/>
</dbReference>
<dbReference type="SUPFAM" id="SSF81665">
    <property type="entry name" value="Calcium ATPase, transmembrane domain M"/>
    <property type="match status" value="1"/>
</dbReference>
<dbReference type="SUPFAM" id="SSF56784">
    <property type="entry name" value="HAD-like"/>
    <property type="match status" value="1"/>
</dbReference>
<dbReference type="PROSITE" id="PS00154">
    <property type="entry name" value="ATPASE_E1_E2"/>
    <property type="match status" value="1"/>
</dbReference>